<dbReference type="EC" id="3.1.-.-" evidence="1"/>
<dbReference type="EMBL" id="CP000050">
    <property type="protein sequence ID" value="AAY48848.1"/>
    <property type="molecule type" value="Genomic_DNA"/>
</dbReference>
<dbReference type="RefSeq" id="WP_011037474.1">
    <property type="nucleotide sequence ID" value="NZ_CP155948.1"/>
</dbReference>
<dbReference type="SMR" id="Q4UVS5"/>
<dbReference type="KEGG" id="xcb:XC_1785"/>
<dbReference type="HOGENOM" id="CLU_106710_0_1_6"/>
<dbReference type="Proteomes" id="UP000000420">
    <property type="component" value="Chromosome"/>
</dbReference>
<dbReference type="GO" id="GO:0005737">
    <property type="term" value="C:cytoplasm"/>
    <property type="evidence" value="ECO:0007669"/>
    <property type="project" value="UniProtKB-SubCell"/>
</dbReference>
<dbReference type="GO" id="GO:0004222">
    <property type="term" value="F:metalloendopeptidase activity"/>
    <property type="evidence" value="ECO:0007669"/>
    <property type="project" value="InterPro"/>
</dbReference>
<dbReference type="GO" id="GO:0004521">
    <property type="term" value="F:RNA endonuclease activity"/>
    <property type="evidence" value="ECO:0007669"/>
    <property type="project" value="UniProtKB-UniRule"/>
</dbReference>
<dbReference type="GO" id="GO:0008270">
    <property type="term" value="F:zinc ion binding"/>
    <property type="evidence" value="ECO:0007669"/>
    <property type="project" value="UniProtKB-UniRule"/>
</dbReference>
<dbReference type="GO" id="GO:0006364">
    <property type="term" value="P:rRNA processing"/>
    <property type="evidence" value="ECO:0007669"/>
    <property type="project" value="UniProtKB-UniRule"/>
</dbReference>
<dbReference type="Gene3D" id="3.40.390.30">
    <property type="entry name" value="Metalloproteases ('zincins'), catalytic domain"/>
    <property type="match status" value="1"/>
</dbReference>
<dbReference type="HAMAP" id="MF_00009">
    <property type="entry name" value="Endoribonucl_YbeY"/>
    <property type="match status" value="1"/>
</dbReference>
<dbReference type="InterPro" id="IPR023091">
    <property type="entry name" value="MetalPrtase_cat_dom_sf_prd"/>
</dbReference>
<dbReference type="InterPro" id="IPR002036">
    <property type="entry name" value="YbeY"/>
</dbReference>
<dbReference type="InterPro" id="IPR020549">
    <property type="entry name" value="YbeY_CS"/>
</dbReference>
<dbReference type="NCBIfam" id="TIGR00043">
    <property type="entry name" value="rRNA maturation RNase YbeY"/>
    <property type="match status" value="1"/>
</dbReference>
<dbReference type="PANTHER" id="PTHR46986">
    <property type="entry name" value="ENDORIBONUCLEASE YBEY, CHLOROPLASTIC"/>
    <property type="match status" value="1"/>
</dbReference>
<dbReference type="PANTHER" id="PTHR46986:SF1">
    <property type="entry name" value="ENDORIBONUCLEASE YBEY, CHLOROPLASTIC"/>
    <property type="match status" value="1"/>
</dbReference>
<dbReference type="Pfam" id="PF02130">
    <property type="entry name" value="YbeY"/>
    <property type="match status" value="1"/>
</dbReference>
<dbReference type="SUPFAM" id="SSF55486">
    <property type="entry name" value="Metalloproteases ('zincins'), catalytic domain"/>
    <property type="match status" value="1"/>
</dbReference>
<dbReference type="PROSITE" id="PS01306">
    <property type="entry name" value="UPF0054"/>
    <property type="match status" value="1"/>
</dbReference>
<sequence>MTKGPVRLDVGVSYALPRTGLPSSVSFRKWVAAALKGRIREADLAVRVVDEKEGCSLNHHYRGKDYATNVLSFPAEMPQGLPKGVKMPLLGDLVICAPVVAREAAEQGKSLSAHYAHLTVHGTLHLLGWDHEDDKEADAMEQLEREILAELGIDDPYAGER</sequence>
<gene>
    <name evidence="1" type="primary">ybeY</name>
    <name type="ordered locus">XC_1785</name>
</gene>
<feature type="chain" id="PRO_0000284348" description="Endoribonuclease YbeY">
    <location>
        <begin position="1"/>
        <end position="161"/>
    </location>
</feature>
<feature type="binding site" evidence="1">
    <location>
        <position position="121"/>
    </location>
    <ligand>
        <name>Zn(2+)</name>
        <dbReference type="ChEBI" id="CHEBI:29105"/>
        <note>catalytic</note>
    </ligand>
</feature>
<feature type="binding site" evidence="1">
    <location>
        <position position="125"/>
    </location>
    <ligand>
        <name>Zn(2+)</name>
        <dbReference type="ChEBI" id="CHEBI:29105"/>
        <note>catalytic</note>
    </ligand>
</feature>
<feature type="binding site" evidence="1">
    <location>
        <position position="131"/>
    </location>
    <ligand>
        <name>Zn(2+)</name>
        <dbReference type="ChEBI" id="CHEBI:29105"/>
        <note>catalytic</note>
    </ligand>
</feature>
<accession>Q4UVS5</accession>
<proteinExistence type="inferred from homology"/>
<name>YBEY_XANC8</name>
<organism>
    <name type="scientific">Xanthomonas campestris pv. campestris (strain 8004)</name>
    <dbReference type="NCBI Taxonomy" id="314565"/>
    <lineage>
        <taxon>Bacteria</taxon>
        <taxon>Pseudomonadati</taxon>
        <taxon>Pseudomonadota</taxon>
        <taxon>Gammaproteobacteria</taxon>
        <taxon>Lysobacterales</taxon>
        <taxon>Lysobacteraceae</taxon>
        <taxon>Xanthomonas</taxon>
    </lineage>
</organism>
<evidence type="ECO:0000255" key="1">
    <source>
        <dbReference type="HAMAP-Rule" id="MF_00009"/>
    </source>
</evidence>
<keyword id="KW-0963">Cytoplasm</keyword>
<keyword id="KW-0255">Endonuclease</keyword>
<keyword id="KW-0378">Hydrolase</keyword>
<keyword id="KW-0479">Metal-binding</keyword>
<keyword id="KW-0540">Nuclease</keyword>
<keyword id="KW-0690">Ribosome biogenesis</keyword>
<keyword id="KW-0698">rRNA processing</keyword>
<keyword id="KW-0862">Zinc</keyword>
<comment type="function">
    <text evidence="1">Single strand-specific metallo-endoribonuclease involved in late-stage 70S ribosome quality control and in maturation of the 3' terminus of the 16S rRNA.</text>
</comment>
<comment type="cofactor">
    <cofactor evidence="1">
        <name>Zn(2+)</name>
        <dbReference type="ChEBI" id="CHEBI:29105"/>
    </cofactor>
    <text evidence="1">Binds 1 zinc ion.</text>
</comment>
<comment type="subcellular location">
    <subcellularLocation>
        <location evidence="1">Cytoplasm</location>
    </subcellularLocation>
</comment>
<comment type="similarity">
    <text evidence="1">Belongs to the endoribonuclease YbeY family.</text>
</comment>
<reference key="1">
    <citation type="journal article" date="2005" name="Genome Res.">
        <title>Comparative and functional genomic analyses of the pathogenicity of phytopathogen Xanthomonas campestris pv. campestris.</title>
        <authorList>
            <person name="Qian W."/>
            <person name="Jia Y."/>
            <person name="Ren S.-X."/>
            <person name="He Y.-Q."/>
            <person name="Feng J.-X."/>
            <person name="Lu L.-F."/>
            <person name="Sun Q."/>
            <person name="Ying G."/>
            <person name="Tang D.-J."/>
            <person name="Tang H."/>
            <person name="Wu W."/>
            <person name="Hao P."/>
            <person name="Wang L."/>
            <person name="Jiang B.-L."/>
            <person name="Zeng S."/>
            <person name="Gu W.-Y."/>
            <person name="Lu G."/>
            <person name="Rong L."/>
            <person name="Tian Y."/>
            <person name="Yao Z."/>
            <person name="Fu G."/>
            <person name="Chen B."/>
            <person name="Fang R."/>
            <person name="Qiang B."/>
            <person name="Chen Z."/>
            <person name="Zhao G.-P."/>
            <person name="Tang J.-L."/>
            <person name="He C."/>
        </authorList>
    </citation>
    <scope>NUCLEOTIDE SEQUENCE [LARGE SCALE GENOMIC DNA]</scope>
    <source>
        <strain>8004</strain>
    </source>
</reference>
<protein>
    <recommendedName>
        <fullName evidence="1">Endoribonuclease YbeY</fullName>
        <ecNumber evidence="1">3.1.-.-</ecNumber>
    </recommendedName>
</protein>